<proteinExistence type="inferred from homology"/>
<organism>
    <name type="scientific">Chlorobium phaeobacteroides (strain DSM 266 / SMG 266 / 2430)</name>
    <dbReference type="NCBI Taxonomy" id="290317"/>
    <lineage>
        <taxon>Bacteria</taxon>
        <taxon>Pseudomonadati</taxon>
        <taxon>Chlorobiota</taxon>
        <taxon>Chlorobiia</taxon>
        <taxon>Chlorobiales</taxon>
        <taxon>Chlorobiaceae</taxon>
        <taxon>Chlorobium/Pelodictyon group</taxon>
        <taxon>Chlorobium</taxon>
    </lineage>
</organism>
<comment type="function">
    <text evidence="1">Catalyzes the conversion of 4-hydroxy-tetrahydrodipicolinate (HTPA) to tetrahydrodipicolinate.</text>
</comment>
<comment type="catalytic activity">
    <reaction evidence="1">
        <text>(S)-2,3,4,5-tetrahydrodipicolinate + NAD(+) + H2O = (2S,4S)-4-hydroxy-2,3,4,5-tetrahydrodipicolinate + NADH + H(+)</text>
        <dbReference type="Rhea" id="RHEA:35323"/>
        <dbReference type="ChEBI" id="CHEBI:15377"/>
        <dbReference type="ChEBI" id="CHEBI:15378"/>
        <dbReference type="ChEBI" id="CHEBI:16845"/>
        <dbReference type="ChEBI" id="CHEBI:57540"/>
        <dbReference type="ChEBI" id="CHEBI:57945"/>
        <dbReference type="ChEBI" id="CHEBI:67139"/>
        <dbReference type="EC" id="1.17.1.8"/>
    </reaction>
</comment>
<comment type="catalytic activity">
    <reaction evidence="1">
        <text>(S)-2,3,4,5-tetrahydrodipicolinate + NADP(+) + H2O = (2S,4S)-4-hydroxy-2,3,4,5-tetrahydrodipicolinate + NADPH + H(+)</text>
        <dbReference type="Rhea" id="RHEA:35331"/>
        <dbReference type="ChEBI" id="CHEBI:15377"/>
        <dbReference type="ChEBI" id="CHEBI:15378"/>
        <dbReference type="ChEBI" id="CHEBI:16845"/>
        <dbReference type="ChEBI" id="CHEBI:57783"/>
        <dbReference type="ChEBI" id="CHEBI:58349"/>
        <dbReference type="ChEBI" id="CHEBI:67139"/>
        <dbReference type="EC" id="1.17.1.8"/>
    </reaction>
</comment>
<comment type="pathway">
    <text evidence="1">Amino-acid biosynthesis; L-lysine biosynthesis via DAP pathway; (S)-tetrahydrodipicolinate from L-aspartate: step 4/4.</text>
</comment>
<comment type="subcellular location">
    <subcellularLocation>
        <location evidence="1">Cytoplasm</location>
    </subcellularLocation>
</comment>
<comment type="similarity">
    <text evidence="1">Belongs to the DapB family.</text>
</comment>
<comment type="caution">
    <text evidence="2">Was originally thought to be a dihydrodipicolinate reductase (DHDPR), catalyzing the conversion of dihydrodipicolinate to tetrahydrodipicolinate. However, it was shown in E.coli that the substrate of the enzymatic reaction is not dihydrodipicolinate (DHDP) but in fact (2S,4S)-4-hydroxy-2,3,4,5-tetrahydrodipicolinic acid (HTPA), the product released by the DapA-catalyzed reaction.</text>
</comment>
<accession>A1BI80</accession>
<sequence length="248" mass="26983">MKVTLVGNGRMGQQVAEVISRSNDHEIAAVLDVDARITPEIFHGSDVIIDFTVRQAFMDNLPAMLASGVPVVVGTTGWDDAMEEVRRMVADARASLMYSANFSLGVNIFLRTLREAARLIAPFGQFDIALEEQHHTGKADFPSGTALRAAELVLEANGRKRTIVRQLSDNRKLAAEELQVASVRLGSVFGKHTAFIDSDADEILVAHTAKSRAGFAGGAVHAAEWLAGMHCEKPGFYTMDDFLNERLS</sequence>
<evidence type="ECO:0000255" key="1">
    <source>
        <dbReference type="HAMAP-Rule" id="MF_00102"/>
    </source>
</evidence>
<evidence type="ECO:0000305" key="2"/>
<dbReference type="EC" id="1.17.1.8" evidence="1"/>
<dbReference type="EMBL" id="CP000492">
    <property type="protein sequence ID" value="ABL66107.1"/>
    <property type="molecule type" value="Genomic_DNA"/>
</dbReference>
<dbReference type="RefSeq" id="WP_011745909.1">
    <property type="nucleotide sequence ID" value="NC_008639.1"/>
</dbReference>
<dbReference type="SMR" id="A1BI80"/>
<dbReference type="STRING" id="290317.Cpha266_2095"/>
<dbReference type="KEGG" id="cph:Cpha266_2095"/>
<dbReference type="eggNOG" id="COG0289">
    <property type="taxonomic scope" value="Bacteria"/>
</dbReference>
<dbReference type="HOGENOM" id="CLU_047479_1_0_10"/>
<dbReference type="OrthoDB" id="9790352at2"/>
<dbReference type="UniPathway" id="UPA00034">
    <property type="reaction ID" value="UER00018"/>
</dbReference>
<dbReference type="Proteomes" id="UP000008701">
    <property type="component" value="Chromosome"/>
</dbReference>
<dbReference type="GO" id="GO:0005829">
    <property type="term" value="C:cytosol"/>
    <property type="evidence" value="ECO:0007669"/>
    <property type="project" value="TreeGrafter"/>
</dbReference>
<dbReference type="GO" id="GO:0008839">
    <property type="term" value="F:4-hydroxy-tetrahydrodipicolinate reductase"/>
    <property type="evidence" value="ECO:0007669"/>
    <property type="project" value="UniProtKB-EC"/>
</dbReference>
<dbReference type="GO" id="GO:0051287">
    <property type="term" value="F:NAD binding"/>
    <property type="evidence" value="ECO:0007669"/>
    <property type="project" value="UniProtKB-UniRule"/>
</dbReference>
<dbReference type="GO" id="GO:0050661">
    <property type="term" value="F:NADP binding"/>
    <property type="evidence" value="ECO:0007669"/>
    <property type="project" value="UniProtKB-UniRule"/>
</dbReference>
<dbReference type="GO" id="GO:0016726">
    <property type="term" value="F:oxidoreductase activity, acting on CH or CH2 groups, NAD or NADP as acceptor"/>
    <property type="evidence" value="ECO:0007669"/>
    <property type="project" value="UniProtKB-UniRule"/>
</dbReference>
<dbReference type="GO" id="GO:0019877">
    <property type="term" value="P:diaminopimelate biosynthetic process"/>
    <property type="evidence" value="ECO:0007669"/>
    <property type="project" value="UniProtKB-UniRule"/>
</dbReference>
<dbReference type="GO" id="GO:0009089">
    <property type="term" value="P:lysine biosynthetic process via diaminopimelate"/>
    <property type="evidence" value="ECO:0007669"/>
    <property type="project" value="UniProtKB-UniRule"/>
</dbReference>
<dbReference type="CDD" id="cd02274">
    <property type="entry name" value="DHDPR_N"/>
    <property type="match status" value="1"/>
</dbReference>
<dbReference type="Gene3D" id="3.30.360.10">
    <property type="entry name" value="Dihydrodipicolinate Reductase, domain 2"/>
    <property type="match status" value="1"/>
</dbReference>
<dbReference type="Gene3D" id="3.40.50.720">
    <property type="entry name" value="NAD(P)-binding Rossmann-like Domain"/>
    <property type="match status" value="1"/>
</dbReference>
<dbReference type="HAMAP" id="MF_00102">
    <property type="entry name" value="DapB"/>
    <property type="match status" value="1"/>
</dbReference>
<dbReference type="InterPro" id="IPR022663">
    <property type="entry name" value="DapB_C"/>
</dbReference>
<dbReference type="InterPro" id="IPR000846">
    <property type="entry name" value="DapB_N"/>
</dbReference>
<dbReference type="InterPro" id="IPR023940">
    <property type="entry name" value="DHDPR_bac"/>
</dbReference>
<dbReference type="InterPro" id="IPR036291">
    <property type="entry name" value="NAD(P)-bd_dom_sf"/>
</dbReference>
<dbReference type="NCBIfam" id="TIGR00036">
    <property type="entry name" value="dapB"/>
    <property type="match status" value="1"/>
</dbReference>
<dbReference type="PANTHER" id="PTHR20836:SF0">
    <property type="entry name" value="4-HYDROXY-TETRAHYDRODIPICOLINATE REDUCTASE 1, CHLOROPLASTIC-RELATED"/>
    <property type="match status" value="1"/>
</dbReference>
<dbReference type="PANTHER" id="PTHR20836">
    <property type="entry name" value="DIHYDRODIPICOLINATE REDUCTASE"/>
    <property type="match status" value="1"/>
</dbReference>
<dbReference type="Pfam" id="PF05173">
    <property type="entry name" value="DapB_C"/>
    <property type="match status" value="1"/>
</dbReference>
<dbReference type="Pfam" id="PF01113">
    <property type="entry name" value="DapB_N"/>
    <property type="match status" value="1"/>
</dbReference>
<dbReference type="PIRSF" id="PIRSF000161">
    <property type="entry name" value="DHPR"/>
    <property type="match status" value="1"/>
</dbReference>
<dbReference type="SUPFAM" id="SSF55347">
    <property type="entry name" value="Glyceraldehyde-3-phosphate dehydrogenase-like, C-terminal domain"/>
    <property type="match status" value="1"/>
</dbReference>
<dbReference type="SUPFAM" id="SSF51735">
    <property type="entry name" value="NAD(P)-binding Rossmann-fold domains"/>
    <property type="match status" value="1"/>
</dbReference>
<keyword id="KW-0028">Amino-acid biosynthesis</keyword>
<keyword id="KW-0963">Cytoplasm</keyword>
<keyword id="KW-0220">Diaminopimelate biosynthesis</keyword>
<keyword id="KW-0457">Lysine biosynthesis</keyword>
<keyword id="KW-0520">NAD</keyword>
<keyword id="KW-0521">NADP</keyword>
<keyword id="KW-0560">Oxidoreductase</keyword>
<keyword id="KW-1185">Reference proteome</keyword>
<feature type="chain" id="PRO_1000093955" description="4-hydroxy-tetrahydrodipicolinate reductase">
    <location>
        <begin position="1"/>
        <end position="248"/>
    </location>
</feature>
<feature type="active site" description="Proton donor/acceptor" evidence="1">
    <location>
        <position position="134"/>
    </location>
</feature>
<feature type="active site" description="Proton donor" evidence="1">
    <location>
        <position position="138"/>
    </location>
</feature>
<feature type="binding site" evidence="1">
    <location>
        <begin position="74"/>
        <end position="76"/>
    </location>
    <ligand>
        <name>NAD(+)</name>
        <dbReference type="ChEBI" id="CHEBI:57540"/>
    </ligand>
</feature>
<feature type="binding site" evidence="1">
    <location>
        <begin position="99"/>
        <end position="102"/>
    </location>
    <ligand>
        <name>NAD(+)</name>
        <dbReference type="ChEBI" id="CHEBI:57540"/>
    </ligand>
</feature>
<feature type="binding site" evidence="1">
    <location>
        <position position="135"/>
    </location>
    <ligand>
        <name>(S)-2,3,4,5-tetrahydrodipicolinate</name>
        <dbReference type="ChEBI" id="CHEBI:16845"/>
    </ligand>
</feature>
<feature type="binding site" evidence="1">
    <location>
        <begin position="144"/>
        <end position="145"/>
    </location>
    <ligand>
        <name>(S)-2,3,4,5-tetrahydrodipicolinate</name>
        <dbReference type="ChEBI" id="CHEBI:16845"/>
    </ligand>
</feature>
<protein>
    <recommendedName>
        <fullName evidence="1">4-hydroxy-tetrahydrodipicolinate reductase</fullName>
        <shortName evidence="1">HTPA reductase</shortName>
        <ecNumber evidence="1">1.17.1.8</ecNumber>
    </recommendedName>
</protein>
<reference key="1">
    <citation type="submission" date="2006-12" db="EMBL/GenBank/DDBJ databases">
        <title>Complete sequence of Chlorobium phaeobacteroides DSM 266.</title>
        <authorList>
            <consortium name="US DOE Joint Genome Institute"/>
            <person name="Copeland A."/>
            <person name="Lucas S."/>
            <person name="Lapidus A."/>
            <person name="Barry K."/>
            <person name="Detter J.C."/>
            <person name="Glavina del Rio T."/>
            <person name="Hammon N."/>
            <person name="Israni S."/>
            <person name="Pitluck S."/>
            <person name="Goltsman E."/>
            <person name="Schmutz J."/>
            <person name="Larimer F."/>
            <person name="Land M."/>
            <person name="Hauser L."/>
            <person name="Mikhailova N."/>
            <person name="Li T."/>
            <person name="Overmann J."/>
            <person name="Bryant D.A."/>
            <person name="Richardson P."/>
        </authorList>
    </citation>
    <scope>NUCLEOTIDE SEQUENCE [LARGE SCALE GENOMIC DNA]</scope>
    <source>
        <strain>DSM 266 / SMG 266 / 2430</strain>
    </source>
</reference>
<gene>
    <name evidence="1" type="primary">dapB</name>
    <name type="ordered locus">Cpha266_2095</name>
</gene>
<name>DAPB_CHLPD</name>